<gene>
    <name evidence="1" type="primary">nth</name>
    <name type="ordered locus">HI_1689</name>
</gene>
<proteinExistence type="inferred from homology"/>
<name>END3_HAEIN</name>
<organism>
    <name type="scientific">Haemophilus influenzae (strain ATCC 51907 / DSM 11121 / KW20 / Rd)</name>
    <dbReference type="NCBI Taxonomy" id="71421"/>
    <lineage>
        <taxon>Bacteria</taxon>
        <taxon>Pseudomonadati</taxon>
        <taxon>Pseudomonadota</taxon>
        <taxon>Gammaproteobacteria</taxon>
        <taxon>Pasteurellales</taxon>
        <taxon>Pasteurellaceae</taxon>
        <taxon>Haemophilus</taxon>
    </lineage>
</organism>
<comment type="function">
    <text evidence="1">DNA repair enzyme that has both DNA N-glycosylase activity and AP-lyase activity. The DNA N-glycosylase activity releases various damaged pyrimidines from DNA by cleaving the N-glycosidic bond, leaving an AP (apurinic/apyrimidinic) site. The AP-lyase activity cleaves the phosphodiester bond 3' to the AP site by a beta-elimination, leaving a 3'-terminal unsaturated sugar and a product with a terminal 5'-phosphate.</text>
</comment>
<comment type="catalytic activity">
    <reaction evidence="1">
        <text>2'-deoxyribonucleotide-(2'-deoxyribose 5'-phosphate)-2'-deoxyribonucleotide-DNA = a 3'-end 2'-deoxyribonucleotide-(2,3-dehydro-2,3-deoxyribose 5'-phosphate)-DNA + a 5'-end 5'-phospho-2'-deoxyribonucleoside-DNA + H(+)</text>
        <dbReference type="Rhea" id="RHEA:66592"/>
        <dbReference type="Rhea" id="RHEA-COMP:13180"/>
        <dbReference type="Rhea" id="RHEA-COMP:16897"/>
        <dbReference type="Rhea" id="RHEA-COMP:17067"/>
        <dbReference type="ChEBI" id="CHEBI:15378"/>
        <dbReference type="ChEBI" id="CHEBI:136412"/>
        <dbReference type="ChEBI" id="CHEBI:157695"/>
        <dbReference type="ChEBI" id="CHEBI:167181"/>
        <dbReference type="EC" id="4.2.99.18"/>
    </reaction>
</comment>
<comment type="cofactor">
    <cofactor evidence="1">
        <name>[4Fe-4S] cluster</name>
        <dbReference type="ChEBI" id="CHEBI:49883"/>
    </cofactor>
    <text evidence="1">Binds 1 [4Fe-4S] cluster.</text>
</comment>
<comment type="similarity">
    <text evidence="1">Belongs to the Nth/MutY family.</text>
</comment>
<evidence type="ECO:0000255" key="1">
    <source>
        <dbReference type="HAMAP-Rule" id="MF_00942"/>
    </source>
</evidence>
<feature type="chain" id="PRO_0000102212" description="Endonuclease III">
    <location>
        <begin position="1"/>
        <end position="211"/>
    </location>
</feature>
<feature type="domain" description="HhH" evidence="1">
    <location>
        <begin position="108"/>
        <end position="127"/>
    </location>
</feature>
<feature type="binding site" evidence="1">
    <location>
        <position position="187"/>
    </location>
    <ligand>
        <name>[4Fe-4S] cluster</name>
        <dbReference type="ChEBI" id="CHEBI:49883"/>
    </ligand>
</feature>
<feature type="binding site" evidence="1">
    <location>
        <position position="194"/>
    </location>
    <ligand>
        <name>[4Fe-4S] cluster</name>
        <dbReference type="ChEBI" id="CHEBI:49883"/>
    </ligand>
</feature>
<feature type="binding site" evidence="1">
    <location>
        <position position="197"/>
    </location>
    <ligand>
        <name>[4Fe-4S] cluster</name>
        <dbReference type="ChEBI" id="CHEBI:49883"/>
    </ligand>
</feature>
<feature type="binding site" evidence="1">
    <location>
        <position position="203"/>
    </location>
    <ligand>
        <name>[4Fe-4S] cluster</name>
        <dbReference type="ChEBI" id="CHEBI:49883"/>
    </ligand>
</feature>
<dbReference type="EC" id="4.2.99.18" evidence="1"/>
<dbReference type="EMBL" id="L42023">
    <property type="protein sequence ID" value="AAC23335.1"/>
    <property type="molecule type" value="Genomic_DNA"/>
</dbReference>
<dbReference type="PIR" id="G64136">
    <property type="entry name" value="G64136"/>
</dbReference>
<dbReference type="RefSeq" id="NP_439831.1">
    <property type="nucleotide sequence ID" value="NC_000907.1"/>
</dbReference>
<dbReference type="SMR" id="P44319"/>
<dbReference type="STRING" id="71421.HI_1689"/>
<dbReference type="EnsemblBacteria" id="AAC23335">
    <property type="protein sequence ID" value="AAC23335"/>
    <property type="gene ID" value="HI_1689"/>
</dbReference>
<dbReference type="KEGG" id="hin:HI_1689"/>
<dbReference type="PATRIC" id="fig|71421.8.peg.1768"/>
<dbReference type="eggNOG" id="COG0177">
    <property type="taxonomic scope" value="Bacteria"/>
</dbReference>
<dbReference type="HOGENOM" id="CLU_012862_3_0_6"/>
<dbReference type="OrthoDB" id="9800977at2"/>
<dbReference type="PhylomeDB" id="P44319"/>
<dbReference type="BioCyc" id="HINF71421:G1GJ1-1705-MONOMER"/>
<dbReference type="Proteomes" id="UP000000579">
    <property type="component" value="Chromosome"/>
</dbReference>
<dbReference type="GO" id="GO:0051539">
    <property type="term" value="F:4 iron, 4 sulfur cluster binding"/>
    <property type="evidence" value="ECO:0007669"/>
    <property type="project" value="UniProtKB-UniRule"/>
</dbReference>
<dbReference type="GO" id="GO:0140078">
    <property type="term" value="F:class I DNA-(apurinic or apyrimidinic site) endonuclease activity"/>
    <property type="evidence" value="ECO:0007669"/>
    <property type="project" value="UniProtKB-EC"/>
</dbReference>
<dbReference type="GO" id="GO:0003677">
    <property type="term" value="F:DNA binding"/>
    <property type="evidence" value="ECO:0007669"/>
    <property type="project" value="UniProtKB-UniRule"/>
</dbReference>
<dbReference type="GO" id="GO:0019104">
    <property type="term" value="F:DNA N-glycosylase activity"/>
    <property type="evidence" value="ECO:0000318"/>
    <property type="project" value="GO_Central"/>
</dbReference>
<dbReference type="GO" id="GO:0046872">
    <property type="term" value="F:metal ion binding"/>
    <property type="evidence" value="ECO:0007669"/>
    <property type="project" value="UniProtKB-KW"/>
</dbReference>
<dbReference type="GO" id="GO:0006285">
    <property type="term" value="P:base-excision repair, AP site formation"/>
    <property type="evidence" value="ECO:0000318"/>
    <property type="project" value="GO_Central"/>
</dbReference>
<dbReference type="CDD" id="cd00056">
    <property type="entry name" value="ENDO3c"/>
    <property type="match status" value="1"/>
</dbReference>
<dbReference type="FunFam" id="1.10.1670.10:FF:000001">
    <property type="entry name" value="Endonuclease III"/>
    <property type="match status" value="1"/>
</dbReference>
<dbReference type="FunFam" id="1.10.340.30:FF:000001">
    <property type="entry name" value="Endonuclease III"/>
    <property type="match status" value="1"/>
</dbReference>
<dbReference type="Gene3D" id="1.10.1670.10">
    <property type="entry name" value="Helix-hairpin-Helix base-excision DNA repair enzymes (C-terminal)"/>
    <property type="match status" value="1"/>
</dbReference>
<dbReference type="Gene3D" id="1.10.340.30">
    <property type="entry name" value="Hypothetical protein, domain 2"/>
    <property type="match status" value="1"/>
</dbReference>
<dbReference type="HAMAP" id="MF_00942">
    <property type="entry name" value="Nth"/>
    <property type="match status" value="1"/>
</dbReference>
<dbReference type="InterPro" id="IPR011257">
    <property type="entry name" value="DNA_glycosylase"/>
</dbReference>
<dbReference type="InterPro" id="IPR004036">
    <property type="entry name" value="Endonuclease-III-like_CS2"/>
</dbReference>
<dbReference type="InterPro" id="IPR003651">
    <property type="entry name" value="Endonuclease3_FeS-loop_motif"/>
</dbReference>
<dbReference type="InterPro" id="IPR004035">
    <property type="entry name" value="Endouclease-III_FeS-bd_BS"/>
</dbReference>
<dbReference type="InterPro" id="IPR003265">
    <property type="entry name" value="HhH-GPD_domain"/>
</dbReference>
<dbReference type="InterPro" id="IPR023170">
    <property type="entry name" value="HhH_base_excis_C"/>
</dbReference>
<dbReference type="InterPro" id="IPR000445">
    <property type="entry name" value="HhH_motif"/>
</dbReference>
<dbReference type="InterPro" id="IPR005759">
    <property type="entry name" value="Nth"/>
</dbReference>
<dbReference type="NCBIfam" id="TIGR01083">
    <property type="entry name" value="nth"/>
    <property type="match status" value="1"/>
</dbReference>
<dbReference type="NCBIfam" id="NF007978">
    <property type="entry name" value="PRK10702.1"/>
    <property type="match status" value="1"/>
</dbReference>
<dbReference type="PANTHER" id="PTHR10359">
    <property type="entry name" value="A/G-SPECIFIC ADENINE GLYCOSYLASE/ENDONUCLEASE III"/>
    <property type="match status" value="1"/>
</dbReference>
<dbReference type="PANTHER" id="PTHR10359:SF18">
    <property type="entry name" value="ENDONUCLEASE III"/>
    <property type="match status" value="1"/>
</dbReference>
<dbReference type="Pfam" id="PF10576">
    <property type="entry name" value="EndIII_4Fe-2S"/>
    <property type="match status" value="1"/>
</dbReference>
<dbReference type="Pfam" id="PF00633">
    <property type="entry name" value="HHH"/>
    <property type="match status" value="1"/>
</dbReference>
<dbReference type="Pfam" id="PF00730">
    <property type="entry name" value="HhH-GPD"/>
    <property type="match status" value="1"/>
</dbReference>
<dbReference type="PIRSF" id="PIRSF001435">
    <property type="entry name" value="Nth"/>
    <property type="match status" value="1"/>
</dbReference>
<dbReference type="SMART" id="SM00478">
    <property type="entry name" value="ENDO3c"/>
    <property type="match status" value="1"/>
</dbReference>
<dbReference type="SMART" id="SM00525">
    <property type="entry name" value="FES"/>
    <property type="match status" value="1"/>
</dbReference>
<dbReference type="SUPFAM" id="SSF48150">
    <property type="entry name" value="DNA-glycosylase"/>
    <property type="match status" value="1"/>
</dbReference>
<dbReference type="PROSITE" id="PS00764">
    <property type="entry name" value="ENDONUCLEASE_III_1"/>
    <property type="match status" value="1"/>
</dbReference>
<dbReference type="PROSITE" id="PS01155">
    <property type="entry name" value="ENDONUCLEASE_III_2"/>
    <property type="match status" value="1"/>
</dbReference>
<reference key="1">
    <citation type="journal article" date="1995" name="Science">
        <title>Whole-genome random sequencing and assembly of Haemophilus influenzae Rd.</title>
        <authorList>
            <person name="Fleischmann R.D."/>
            <person name="Adams M.D."/>
            <person name="White O."/>
            <person name="Clayton R.A."/>
            <person name="Kirkness E.F."/>
            <person name="Kerlavage A.R."/>
            <person name="Bult C.J."/>
            <person name="Tomb J.-F."/>
            <person name="Dougherty B.A."/>
            <person name="Merrick J.M."/>
            <person name="McKenney K."/>
            <person name="Sutton G.G."/>
            <person name="FitzHugh W."/>
            <person name="Fields C.A."/>
            <person name="Gocayne J.D."/>
            <person name="Scott J.D."/>
            <person name="Shirley R."/>
            <person name="Liu L.-I."/>
            <person name="Glodek A."/>
            <person name="Kelley J.M."/>
            <person name="Weidman J.F."/>
            <person name="Phillips C.A."/>
            <person name="Spriggs T."/>
            <person name="Hedblom E."/>
            <person name="Cotton M.D."/>
            <person name="Utterback T.R."/>
            <person name="Hanna M.C."/>
            <person name="Nguyen D.T."/>
            <person name="Saudek D.M."/>
            <person name="Brandon R.C."/>
            <person name="Fine L.D."/>
            <person name="Fritchman J.L."/>
            <person name="Fuhrmann J.L."/>
            <person name="Geoghagen N.S.M."/>
            <person name="Gnehm C.L."/>
            <person name="McDonald L.A."/>
            <person name="Small K.V."/>
            <person name="Fraser C.M."/>
            <person name="Smith H.O."/>
            <person name="Venter J.C."/>
        </authorList>
    </citation>
    <scope>NUCLEOTIDE SEQUENCE [LARGE SCALE GENOMIC DNA]</scope>
    <source>
        <strain>ATCC 51907 / DSM 11121 / KW20 / Rd</strain>
    </source>
</reference>
<keyword id="KW-0004">4Fe-4S</keyword>
<keyword id="KW-0227">DNA damage</keyword>
<keyword id="KW-0234">DNA repair</keyword>
<keyword id="KW-0238">DNA-binding</keyword>
<keyword id="KW-0326">Glycosidase</keyword>
<keyword id="KW-0378">Hydrolase</keyword>
<keyword id="KW-0408">Iron</keyword>
<keyword id="KW-0411">Iron-sulfur</keyword>
<keyword id="KW-0456">Lyase</keyword>
<keyword id="KW-0479">Metal-binding</keyword>
<keyword id="KW-1185">Reference proteome</keyword>
<sequence>MNKTKRIEILTRLREQNPHPTTELQYNSPFELLIAVILSAQATDKGVNKATEKLFPVANTPQAILDLGLDGLKSYIKTIGLFNSKAENIIKTCRDLIEKHNGEVPENREALEALAGVGRKTANVVLNTAFGHPTIAVDTHIFRVCNRTNFAAGKDVVKVEEKLLKVVPNEFKVDVHHWLILHGRYTCIARKPRCGSCIIEDLCEYKEKVEF</sequence>
<protein>
    <recommendedName>
        <fullName evidence="1">Endonuclease III</fullName>
        <ecNumber evidence="1">4.2.99.18</ecNumber>
    </recommendedName>
    <alternativeName>
        <fullName evidence="1">DNA-(apurinic or apyrimidinic site) lyase</fullName>
    </alternativeName>
</protein>
<accession>P44319</accession>